<name>RLMI_ALIF1</name>
<keyword id="KW-0963">Cytoplasm</keyword>
<keyword id="KW-0489">Methyltransferase</keyword>
<keyword id="KW-1185">Reference proteome</keyword>
<keyword id="KW-0694">RNA-binding</keyword>
<keyword id="KW-0698">rRNA processing</keyword>
<keyword id="KW-0949">S-adenosyl-L-methionine</keyword>
<keyword id="KW-0808">Transferase</keyword>
<protein>
    <recommendedName>
        <fullName evidence="1">Ribosomal RNA large subunit methyltransferase I</fullName>
        <ecNumber evidence="1">2.1.1.191</ecNumber>
    </recommendedName>
    <alternativeName>
        <fullName evidence="1">23S rRNA m5C1962 methyltransferase</fullName>
    </alternativeName>
    <alternativeName>
        <fullName evidence="1">rRNA (cytosine-C(5)-)-methyltransferase RlmI</fullName>
    </alternativeName>
</protein>
<gene>
    <name evidence="1" type="primary">rlmI</name>
    <name type="ordered locus">VF_1505</name>
</gene>
<feature type="chain" id="PRO_0000366273" description="Ribosomal RNA large subunit methyltransferase I">
    <location>
        <begin position="1"/>
        <end position="396"/>
    </location>
</feature>
<feature type="domain" description="PUA" evidence="1">
    <location>
        <begin position="2"/>
        <end position="81"/>
    </location>
</feature>
<organism>
    <name type="scientific">Aliivibrio fischeri (strain ATCC 700601 / ES114)</name>
    <name type="common">Vibrio fischeri</name>
    <dbReference type="NCBI Taxonomy" id="312309"/>
    <lineage>
        <taxon>Bacteria</taxon>
        <taxon>Pseudomonadati</taxon>
        <taxon>Pseudomonadota</taxon>
        <taxon>Gammaproteobacteria</taxon>
        <taxon>Vibrionales</taxon>
        <taxon>Vibrionaceae</taxon>
        <taxon>Aliivibrio</taxon>
    </lineage>
</organism>
<proteinExistence type="inferred from homology"/>
<accession>Q5E4P6</accession>
<reference key="1">
    <citation type="journal article" date="2005" name="Proc. Natl. Acad. Sci. U.S.A.">
        <title>Complete genome sequence of Vibrio fischeri: a symbiotic bacterium with pathogenic congeners.</title>
        <authorList>
            <person name="Ruby E.G."/>
            <person name="Urbanowski M."/>
            <person name="Campbell J."/>
            <person name="Dunn A."/>
            <person name="Faini M."/>
            <person name="Gunsalus R."/>
            <person name="Lostroh P."/>
            <person name="Lupp C."/>
            <person name="McCann J."/>
            <person name="Millikan D."/>
            <person name="Schaefer A."/>
            <person name="Stabb E."/>
            <person name="Stevens A."/>
            <person name="Visick K."/>
            <person name="Whistler C."/>
            <person name="Greenberg E.P."/>
        </authorList>
    </citation>
    <scope>NUCLEOTIDE SEQUENCE [LARGE SCALE GENOMIC DNA]</scope>
    <source>
        <strain>ATCC 700601 / ES114</strain>
    </source>
</reference>
<evidence type="ECO:0000255" key="1">
    <source>
        <dbReference type="HAMAP-Rule" id="MF_01857"/>
    </source>
</evidence>
<sequence>MTVSIYLAKGRDKALRRRHPWIFSRGIDRIDGKAELGETVEIYANNGEWLARGAFSPQSQIRARVWTFDKNEAIDKDFFVRKLNQAQALRNVLAERDGLTGYRLIAAESDGLPGITIDRYQDYFVCQLLSAGAEATKELLVEALVECYPDCNIYERSDVSVRKKEGLKQRTGVLHGEEPPESVVIEENGVKISVDIVNGHKTGFYLDQRDSRERACKYVKNKSVLNCFSYTGGFGLYALKGGAKHVINADVSQLALDTAKYNAEINKFDLSKAEFLNADVFKLLREYRDNGTKFDVVIMDPPKFAESKNQLTGACRGYKDINMLAMQILNPGGTLLTYSCSGLMDAGLFQKIVADAALDAHRTVQFIERFEQAADHPLDSAYPEGFYLKGFACRVV</sequence>
<dbReference type="EC" id="2.1.1.191" evidence="1"/>
<dbReference type="EMBL" id="CP000020">
    <property type="protein sequence ID" value="AAW86000.1"/>
    <property type="molecule type" value="Genomic_DNA"/>
</dbReference>
<dbReference type="RefSeq" id="WP_011262085.1">
    <property type="nucleotide sequence ID" value="NC_006840.2"/>
</dbReference>
<dbReference type="RefSeq" id="YP_204888.1">
    <property type="nucleotide sequence ID" value="NC_006840.2"/>
</dbReference>
<dbReference type="SMR" id="Q5E4P6"/>
<dbReference type="STRING" id="312309.VF_1505"/>
<dbReference type="EnsemblBacteria" id="AAW86000">
    <property type="protein sequence ID" value="AAW86000"/>
    <property type="gene ID" value="VF_1505"/>
</dbReference>
<dbReference type="GeneID" id="54164178"/>
<dbReference type="KEGG" id="vfi:VF_1505"/>
<dbReference type="PATRIC" id="fig|312309.11.peg.1522"/>
<dbReference type="eggNOG" id="COG1092">
    <property type="taxonomic scope" value="Bacteria"/>
</dbReference>
<dbReference type="HOGENOM" id="CLU_014042_0_0_6"/>
<dbReference type="OrthoDB" id="9805492at2"/>
<dbReference type="Proteomes" id="UP000000537">
    <property type="component" value="Chromosome I"/>
</dbReference>
<dbReference type="GO" id="GO:0005737">
    <property type="term" value="C:cytoplasm"/>
    <property type="evidence" value="ECO:0007669"/>
    <property type="project" value="UniProtKB-SubCell"/>
</dbReference>
<dbReference type="GO" id="GO:0003723">
    <property type="term" value="F:RNA binding"/>
    <property type="evidence" value="ECO:0007669"/>
    <property type="project" value="UniProtKB-KW"/>
</dbReference>
<dbReference type="GO" id="GO:0016434">
    <property type="term" value="F:rRNA (cytosine) methyltransferase activity"/>
    <property type="evidence" value="ECO:0007669"/>
    <property type="project" value="UniProtKB-UniRule"/>
</dbReference>
<dbReference type="CDD" id="cd02440">
    <property type="entry name" value="AdoMet_MTases"/>
    <property type="match status" value="1"/>
</dbReference>
<dbReference type="CDD" id="cd21153">
    <property type="entry name" value="PUA_RlmI"/>
    <property type="match status" value="1"/>
</dbReference>
<dbReference type="CDD" id="cd11572">
    <property type="entry name" value="RlmI_M_like"/>
    <property type="match status" value="1"/>
</dbReference>
<dbReference type="Gene3D" id="2.30.130.10">
    <property type="entry name" value="PUA domain"/>
    <property type="match status" value="1"/>
</dbReference>
<dbReference type="Gene3D" id="3.30.750.80">
    <property type="entry name" value="RNA methyltransferase domain (HRMD) like"/>
    <property type="match status" value="1"/>
</dbReference>
<dbReference type="Gene3D" id="3.40.50.150">
    <property type="entry name" value="Vaccinia Virus protein VP39"/>
    <property type="match status" value="1"/>
</dbReference>
<dbReference type="HAMAP" id="MF_01857">
    <property type="entry name" value="23SrRNA_methyltr_I"/>
    <property type="match status" value="1"/>
</dbReference>
<dbReference type="InterPro" id="IPR002478">
    <property type="entry name" value="PUA"/>
</dbReference>
<dbReference type="InterPro" id="IPR015947">
    <property type="entry name" value="PUA-like_sf"/>
</dbReference>
<dbReference type="InterPro" id="IPR036974">
    <property type="entry name" value="PUA_sf"/>
</dbReference>
<dbReference type="InterPro" id="IPR023542">
    <property type="entry name" value="RLMI"/>
</dbReference>
<dbReference type="InterPro" id="IPR041532">
    <property type="entry name" value="RlmI-like_PUA"/>
</dbReference>
<dbReference type="InterPro" id="IPR019614">
    <property type="entry name" value="SAM-dep_methyl-trfase"/>
</dbReference>
<dbReference type="InterPro" id="IPR029063">
    <property type="entry name" value="SAM-dependent_MTases_sf"/>
</dbReference>
<dbReference type="PANTHER" id="PTHR42873">
    <property type="entry name" value="RIBOSOMAL RNA LARGE SUBUNIT METHYLTRANSFERASE"/>
    <property type="match status" value="1"/>
</dbReference>
<dbReference type="PANTHER" id="PTHR42873:SF1">
    <property type="entry name" value="S-ADENOSYLMETHIONINE-DEPENDENT METHYLTRANSFERASE DOMAIN-CONTAINING PROTEIN"/>
    <property type="match status" value="1"/>
</dbReference>
<dbReference type="Pfam" id="PF10672">
    <property type="entry name" value="Methyltrans_SAM"/>
    <property type="match status" value="1"/>
</dbReference>
<dbReference type="Pfam" id="PF17785">
    <property type="entry name" value="PUA_3"/>
    <property type="match status" value="1"/>
</dbReference>
<dbReference type="SMART" id="SM00359">
    <property type="entry name" value="PUA"/>
    <property type="match status" value="1"/>
</dbReference>
<dbReference type="SUPFAM" id="SSF88697">
    <property type="entry name" value="PUA domain-like"/>
    <property type="match status" value="1"/>
</dbReference>
<dbReference type="SUPFAM" id="SSF53335">
    <property type="entry name" value="S-adenosyl-L-methionine-dependent methyltransferases"/>
    <property type="match status" value="1"/>
</dbReference>
<dbReference type="PROSITE" id="PS50890">
    <property type="entry name" value="PUA"/>
    <property type="match status" value="1"/>
</dbReference>
<comment type="function">
    <text evidence="1">Specifically methylates the cytosine at position 1962 (m5C1962) of 23S rRNA.</text>
</comment>
<comment type="catalytic activity">
    <reaction evidence="1">
        <text>cytidine(1962) in 23S rRNA + S-adenosyl-L-methionine = 5-methylcytidine(1962) in 23S rRNA + S-adenosyl-L-homocysteine + H(+)</text>
        <dbReference type="Rhea" id="RHEA:42912"/>
        <dbReference type="Rhea" id="RHEA-COMP:10382"/>
        <dbReference type="Rhea" id="RHEA-COMP:10386"/>
        <dbReference type="ChEBI" id="CHEBI:15378"/>
        <dbReference type="ChEBI" id="CHEBI:57856"/>
        <dbReference type="ChEBI" id="CHEBI:59789"/>
        <dbReference type="ChEBI" id="CHEBI:74483"/>
        <dbReference type="ChEBI" id="CHEBI:82748"/>
        <dbReference type="EC" id="2.1.1.191"/>
    </reaction>
</comment>
<comment type="subcellular location">
    <subcellularLocation>
        <location evidence="1">Cytoplasm</location>
    </subcellularLocation>
</comment>
<comment type="similarity">
    <text evidence="1">Belongs to the methyltransferase superfamily. RlmI family.</text>
</comment>